<comment type="function">
    <text evidence="1">Catalyzes the NADPH-dependent rearrangement and reduction of 1-deoxy-D-xylulose-5-phosphate (DXP) to 2-C-methyl-D-erythritol 4-phosphate (MEP).</text>
</comment>
<comment type="catalytic activity">
    <reaction evidence="1">
        <text>2-C-methyl-D-erythritol 4-phosphate + NADP(+) = 1-deoxy-D-xylulose 5-phosphate + NADPH + H(+)</text>
        <dbReference type="Rhea" id="RHEA:13717"/>
        <dbReference type="ChEBI" id="CHEBI:15378"/>
        <dbReference type="ChEBI" id="CHEBI:57783"/>
        <dbReference type="ChEBI" id="CHEBI:57792"/>
        <dbReference type="ChEBI" id="CHEBI:58262"/>
        <dbReference type="ChEBI" id="CHEBI:58349"/>
        <dbReference type="EC" id="1.1.1.267"/>
    </reaction>
    <physiologicalReaction direction="right-to-left" evidence="1">
        <dbReference type="Rhea" id="RHEA:13719"/>
    </physiologicalReaction>
</comment>
<comment type="cofactor">
    <cofactor evidence="1">
        <name>Mg(2+)</name>
        <dbReference type="ChEBI" id="CHEBI:18420"/>
    </cofactor>
    <cofactor evidence="1">
        <name>Mn(2+)</name>
        <dbReference type="ChEBI" id="CHEBI:29035"/>
    </cofactor>
</comment>
<comment type="pathway">
    <text evidence="1">Isoprenoid biosynthesis; isopentenyl diphosphate biosynthesis via DXP pathway; isopentenyl diphosphate from 1-deoxy-D-xylulose 5-phosphate: step 1/6.</text>
</comment>
<comment type="similarity">
    <text evidence="1">Belongs to the DXR family.</text>
</comment>
<reference key="1">
    <citation type="submission" date="2008-06" db="EMBL/GenBank/DDBJ databases">
        <title>Complete sequence of Chloroherpeton thalassium ATCC 35110.</title>
        <authorList>
            <consortium name="US DOE Joint Genome Institute"/>
            <person name="Lucas S."/>
            <person name="Copeland A."/>
            <person name="Lapidus A."/>
            <person name="Glavina del Rio T."/>
            <person name="Dalin E."/>
            <person name="Tice H."/>
            <person name="Bruce D."/>
            <person name="Goodwin L."/>
            <person name="Pitluck S."/>
            <person name="Schmutz J."/>
            <person name="Larimer F."/>
            <person name="Land M."/>
            <person name="Hauser L."/>
            <person name="Kyrpides N."/>
            <person name="Mikhailova N."/>
            <person name="Liu Z."/>
            <person name="Li T."/>
            <person name="Zhao F."/>
            <person name="Overmann J."/>
            <person name="Bryant D.A."/>
            <person name="Richardson P."/>
        </authorList>
    </citation>
    <scope>NUCLEOTIDE SEQUENCE [LARGE SCALE GENOMIC DNA]</scope>
    <source>
        <strain>ATCC 35110 / GB-78</strain>
    </source>
</reference>
<evidence type="ECO:0000255" key="1">
    <source>
        <dbReference type="HAMAP-Rule" id="MF_00183"/>
    </source>
</evidence>
<organism>
    <name type="scientific">Chloroherpeton thalassium (strain ATCC 35110 / GB-78)</name>
    <dbReference type="NCBI Taxonomy" id="517418"/>
    <lineage>
        <taxon>Bacteria</taxon>
        <taxon>Pseudomonadati</taxon>
        <taxon>Chlorobiota</taxon>
        <taxon>Chlorobiia</taxon>
        <taxon>Chlorobiales</taxon>
        <taxon>Chloroherpetonaceae</taxon>
        <taxon>Chloroherpeton</taxon>
    </lineage>
</organism>
<dbReference type="EC" id="1.1.1.267" evidence="1"/>
<dbReference type="EMBL" id="CP001100">
    <property type="protein sequence ID" value="ACF13508.1"/>
    <property type="molecule type" value="Genomic_DNA"/>
</dbReference>
<dbReference type="RefSeq" id="WP_012499592.1">
    <property type="nucleotide sequence ID" value="NC_011026.1"/>
</dbReference>
<dbReference type="SMR" id="B3QXY0"/>
<dbReference type="STRING" id="517418.Ctha_1044"/>
<dbReference type="KEGG" id="cts:Ctha_1044"/>
<dbReference type="eggNOG" id="COG0743">
    <property type="taxonomic scope" value="Bacteria"/>
</dbReference>
<dbReference type="HOGENOM" id="CLU_035714_4_0_10"/>
<dbReference type="OrthoDB" id="9806546at2"/>
<dbReference type="UniPathway" id="UPA00056">
    <property type="reaction ID" value="UER00092"/>
</dbReference>
<dbReference type="Proteomes" id="UP000001208">
    <property type="component" value="Chromosome"/>
</dbReference>
<dbReference type="GO" id="GO:0030604">
    <property type="term" value="F:1-deoxy-D-xylulose-5-phosphate reductoisomerase activity"/>
    <property type="evidence" value="ECO:0007669"/>
    <property type="project" value="UniProtKB-UniRule"/>
</dbReference>
<dbReference type="GO" id="GO:0030145">
    <property type="term" value="F:manganese ion binding"/>
    <property type="evidence" value="ECO:0007669"/>
    <property type="project" value="TreeGrafter"/>
</dbReference>
<dbReference type="GO" id="GO:0070402">
    <property type="term" value="F:NADPH binding"/>
    <property type="evidence" value="ECO:0007669"/>
    <property type="project" value="InterPro"/>
</dbReference>
<dbReference type="GO" id="GO:0051484">
    <property type="term" value="P:isopentenyl diphosphate biosynthetic process, methylerythritol 4-phosphate pathway involved in terpenoid biosynthetic process"/>
    <property type="evidence" value="ECO:0007669"/>
    <property type="project" value="TreeGrafter"/>
</dbReference>
<dbReference type="FunFam" id="3.40.50.720:FF:000045">
    <property type="entry name" value="1-deoxy-D-xylulose 5-phosphate reductoisomerase"/>
    <property type="match status" value="1"/>
</dbReference>
<dbReference type="Gene3D" id="1.10.1740.10">
    <property type="match status" value="1"/>
</dbReference>
<dbReference type="Gene3D" id="3.40.50.720">
    <property type="entry name" value="NAD(P)-binding Rossmann-like Domain"/>
    <property type="match status" value="1"/>
</dbReference>
<dbReference type="HAMAP" id="MF_00183">
    <property type="entry name" value="DXP_reductoisom"/>
    <property type="match status" value="1"/>
</dbReference>
<dbReference type="InterPro" id="IPR003821">
    <property type="entry name" value="DXP_reductoisomerase"/>
</dbReference>
<dbReference type="InterPro" id="IPR013644">
    <property type="entry name" value="DXP_reductoisomerase_C"/>
</dbReference>
<dbReference type="InterPro" id="IPR013512">
    <property type="entry name" value="DXP_reductoisomerase_N"/>
</dbReference>
<dbReference type="InterPro" id="IPR026877">
    <property type="entry name" value="DXPR_C"/>
</dbReference>
<dbReference type="InterPro" id="IPR036169">
    <property type="entry name" value="DXPR_C_sf"/>
</dbReference>
<dbReference type="InterPro" id="IPR036291">
    <property type="entry name" value="NAD(P)-bd_dom_sf"/>
</dbReference>
<dbReference type="NCBIfam" id="TIGR00243">
    <property type="entry name" value="Dxr"/>
    <property type="match status" value="1"/>
</dbReference>
<dbReference type="NCBIfam" id="NF009114">
    <property type="entry name" value="PRK12464.1"/>
    <property type="match status" value="1"/>
</dbReference>
<dbReference type="PANTHER" id="PTHR30525">
    <property type="entry name" value="1-DEOXY-D-XYLULOSE 5-PHOSPHATE REDUCTOISOMERASE"/>
    <property type="match status" value="1"/>
</dbReference>
<dbReference type="PANTHER" id="PTHR30525:SF0">
    <property type="entry name" value="1-DEOXY-D-XYLULOSE 5-PHOSPHATE REDUCTOISOMERASE, CHLOROPLASTIC"/>
    <property type="match status" value="1"/>
</dbReference>
<dbReference type="Pfam" id="PF08436">
    <property type="entry name" value="DXP_redisom_C"/>
    <property type="match status" value="1"/>
</dbReference>
<dbReference type="Pfam" id="PF02670">
    <property type="entry name" value="DXP_reductoisom"/>
    <property type="match status" value="1"/>
</dbReference>
<dbReference type="Pfam" id="PF13288">
    <property type="entry name" value="DXPR_C"/>
    <property type="match status" value="1"/>
</dbReference>
<dbReference type="PIRSF" id="PIRSF006205">
    <property type="entry name" value="Dxp_reductismrs"/>
    <property type="match status" value="1"/>
</dbReference>
<dbReference type="SUPFAM" id="SSF69055">
    <property type="entry name" value="1-deoxy-D-xylulose-5-phosphate reductoisomerase, C-terminal domain"/>
    <property type="match status" value="1"/>
</dbReference>
<dbReference type="SUPFAM" id="SSF55347">
    <property type="entry name" value="Glyceraldehyde-3-phosphate dehydrogenase-like, C-terminal domain"/>
    <property type="match status" value="1"/>
</dbReference>
<dbReference type="SUPFAM" id="SSF51735">
    <property type="entry name" value="NAD(P)-binding Rossmann-fold domains"/>
    <property type="match status" value="1"/>
</dbReference>
<accession>B3QXY0</accession>
<protein>
    <recommendedName>
        <fullName evidence="1">1-deoxy-D-xylulose 5-phosphate reductoisomerase</fullName>
        <shortName evidence="1">DXP reductoisomerase</shortName>
        <ecNumber evidence="1">1.1.1.267</ecNumber>
    </recommendedName>
    <alternativeName>
        <fullName evidence="1">1-deoxyxylulose-5-phosphate reductoisomerase</fullName>
    </alternativeName>
    <alternativeName>
        <fullName evidence="1">2-C-methyl-D-erythritol 4-phosphate synthase</fullName>
    </alternativeName>
</protein>
<name>DXR_CHLT3</name>
<gene>
    <name evidence="1" type="primary">dxr</name>
    <name type="ordered locus">Ctha_1044</name>
</gene>
<feature type="chain" id="PRO_1000124084" description="1-deoxy-D-xylulose 5-phosphate reductoisomerase">
    <location>
        <begin position="1"/>
        <end position="387"/>
    </location>
</feature>
<feature type="binding site" evidence="1">
    <location>
        <position position="10"/>
    </location>
    <ligand>
        <name>NADPH</name>
        <dbReference type="ChEBI" id="CHEBI:57783"/>
    </ligand>
</feature>
<feature type="binding site" evidence="1">
    <location>
        <position position="11"/>
    </location>
    <ligand>
        <name>NADPH</name>
        <dbReference type="ChEBI" id="CHEBI:57783"/>
    </ligand>
</feature>
<feature type="binding site" evidence="1">
    <location>
        <position position="12"/>
    </location>
    <ligand>
        <name>NADPH</name>
        <dbReference type="ChEBI" id="CHEBI:57783"/>
    </ligand>
</feature>
<feature type="binding site" evidence="1">
    <location>
        <position position="13"/>
    </location>
    <ligand>
        <name>NADPH</name>
        <dbReference type="ChEBI" id="CHEBI:57783"/>
    </ligand>
</feature>
<feature type="binding site" evidence="1">
    <location>
        <position position="36"/>
    </location>
    <ligand>
        <name>NADPH</name>
        <dbReference type="ChEBI" id="CHEBI:57783"/>
    </ligand>
</feature>
<feature type="binding site" evidence="1">
    <location>
        <position position="38"/>
    </location>
    <ligand>
        <name>NADPH</name>
        <dbReference type="ChEBI" id="CHEBI:57783"/>
    </ligand>
</feature>
<feature type="binding site" evidence="1">
    <location>
        <position position="122"/>
    </location>
    <ligand>
        <name>NADPH</name>
        <dbReference type="ChEBI" id="CHEBI:57783"/>
    </ligand>
</feature>
<feature type="binding site" evidence="1">
    <location>
        <position position="123"/>
    </location>
    <ligand>
        <name>1-deoxy-D-xylulose 5-phosphate</name>
        <dbReference type="ChEBI" id="CHEBI:57792"/>
    </ligand>
</feature>
<feature type="binding site" evidence="1">
    <location>
        <position position="124"/>
    </location>
    <ligand>
        <name>NADPH</name>
        <dbReference type="ChEBI" id="CHEBI:57783"/>
    </ligand>
</feature>
<feature type="binding site" evidence="1">
    <location>
        <position position="148"/>
    </location>
    <ligand>
        <name>Mn(2+)</name>
        <dbReference type="ChEBI" id="CHEBI:29035"/>
    </ligand>
</feature>
<feature type="binding site" evidence="1">
    <location>
        <position position="149"/>
    </location>
    <ligand>
        <name>1-deoxy-D-xylulose 5-phosphate</name>
        <dbReference type="ChEBI" id="CHEBI:57792"/>
    </ligand>
</feature>
<feature type="binding site" evidence="1">
    <location>
        <position position="150"/>
    </location>
    <ligand>
        <name>1-deoxy-D-xylulose 5-phosphate</name>
        <dbReference type="ChEBI" id="CHEBI:57792"/>
    </ligand>
</feature>
<feature type="binding site" evidence="1">
    <location>
        <position position="150"/>
    </location>
    <ligand>
        <name>Mn(2+)</name>
        <dbReference type="ChEBI" id="CHEBI:29035"/>
    </ligand>
</feature>
<feature type="binding site" evidence="1">
    <location>
        <position position="174"/>
    </location>
    <ligand>
        <name>1-deoxy-D-xylulose 5-phosphate</name>
        <dbReference type="ChEBI" id="CHEBI:57792"/>
    </ligand>
</feature>
<feature type="binding site" evidence="1">
    <location>
        <position position="197"/>
    </location>
    <ligand>
        <name>1-deoxy-D-xylulose 5-phosphate</name>
        <dbReference type="ChEBI" id="CHEBI:57792"/>
    </ligand>
</feature>
<feature type="binding site" evidence="1">
    <location>
        <position position="203"/>
    </location>
    <ligand>
        <name>NADPH</name>
        <dbReference type="ChEBI" id="CHEBI:57783"/>
    </ligand>
</feature>
<feature type="binding site" evidence="1">
    <location>
        <position position="210"/>
    </location>
    <ligand>
        <name>1-deoxy-D-xylulose 5-phosphate</name>
        <dbReference type="ChEBI" id="CHEBI:57792"/>
    </ligand>
</feature>
<feature type="binding site" evidence="1">
    <location>
        <position position="215"/>
    </location>
    <ligand>
        <name>1-deoxy-D-xylulose 5-phosphate</name>
        <dbReference type="ChEBI" id="CHEBI:57792"/>
    </ligand>
</feature>
<feature type="binding site" evidence="1">
    <location>
        <position position="216"/>
    </location>
    <ligand>
        <name>1-deoxy-D-xylulose 5-phosphate</name>
        <dbReference type="ChEBI" id="CHEBI:57792"/>
    </ligand>
</feature>
<feature type="binding site" evidence="1">
    <location>
        <position position="219"/>
    </location>
    <ligand>
        <name>1-deoxy-D-xylulose 5-phosphate</name>
        <dbReference type="ChEBI" id="CHEBI:57792"/>
    </ligand>
</feature>
<feature type="binding site" evidence="1">
    <location>
        <position position="219"/>
    </location>
    <ligand>
        <name>Mn(2+)</name>
        <dbReference type="ChEBI" id="CHEBI:29035"/>
    </ligand>
</feature>
<proteinExistence type="inferred from homology"/>
<sequence>MKRITILGSTGSIGTNSLEVISRFPEQFCATYLSAGSNVKLLAEQAKRFRPKGVVIMNESLEGELRSLLAGESIEIMSGEEGLCEISRRSDTDFVIGSVVGFAGLKPTVEALKAGKDVGLANKETLVVGGEIITSLVEEHGCKMLPVDSEHSAIFQCLVGEAPEFVGKIILTASGGPFRTWEKSRFEQITVADALNHPNWKMGSKITIDSATMMNKGLEVIEAKWLFNLDYDRIDVVVHPQSIVHSMVEFKDGSVKAQLGVPDMKIPIQYALTYPERFYADYERLDWRNISKLDFETPDTEKFRCLALAYEAGRKGGSYPAVLNAANEVAVELFLKEKISFLNISELIDDAMQAHDGRAASSIDDLIDIDAQTRRYVYDKADAMHAV</sequence>
<keyword id="KW-0414">Isoprene biosynthesis</keyword>
<keyword id="KW-0464">Manganese</keyword>
<keyword id="KW-0479">Metal-binding</keyword>
<keyword id="KW-0521">NADP</keyword>
<keyword id="KW-0560">Oxidoreductase</keyword>
<keyword id="KW-1185">Reference proteome</keyword>